<feature type="chain" id="PRO_0000023069" description="Aspartate 1-decarboxylase beta chain" evidence="1">
    <location>
        <begin position="1"/>
        <end position="24"/>
    </location>
</feature>
<feature type="chain" id="PRO_0000023070" description="Aspartate 1-decarboxylase alpha chain" evidence="1">
    <location>
        <begin position="25"/>
        <end position="120"/>
    </location>
</feature>
<feature type="active site" description="Schiff-base intermediate with substrate; via pyruvic acid" evidence="1">
    <location>
        <position position="25"/>
    </location>
</feature>
<feature type="active site" description="Proton donor" evidence="1">
    <location>
        <position position="58"/>
    </location>
</feature>
<feature type="binding site" evidence="1">
    <location>
        <position position="57"/>
    </location>
    <ligand>
        <name>substrate</name>
    </ligand>
</feature>
<feature type="binding site" evidence="1">
    <location>
        <begin position="73"/>
        <end position="75"/>
    </location>
    <ligand>
        <name>substrate</name>
    </ligand>
</feature>
<feature type="modified residue" description="Pyruvic acid (Ser)" evidence="1">
    <location>
        <position position="25"/>
    </location>
</feature>
<keyword id="KW-0068">Autocatalytic cleavage</keyword>
<keyword id="KW-0963">Cytoplasm</keyword>
<keyword id="KW-0210">Decarboxylase</keyword>
<keyword id="KW-0456">Lyase</keyword>
<keyword id="KW-0566">Pantothenate biosynthesis</keyword>
<keyword id="KW-0670">Pyruvate</keyword>
<keyword id="KW-1185">Reference proteome</keyword>
<keyword id="KW-0704">Schiff base</keyword>
<keyword id="KW-0865">Zymogen</keyword>
<evidence type="ECO:0000255" key="1">
    <source>
        <dbReference type="HAMAP-Rule" id="MF_00446"/>
    </source>
</evidence>
<proteinExistence type="inferred from homology"/>
<dbReference type="EC" id="4.1.1.11" evidence="1"/>
<dbReference type="EMBL" id="AE000513">
    <property type="protein sequence ID" value="AAF10296.1"/>
    <property type="molecule type" value="Genomic_DNA"/>
</dbReference>
<dbReference type="PIR" id="H75483">
    <property type="entry name" value="H75483"/>
</dbReference>
<dbReference type="RefSeq" id="NP_294441.1">
    <property type="nucleotide sequence ID" value="NC_001263.1"/>
</dbReference>
<dbReference type="RefSeq" id="WP_010887363.1">
    <property type="nucleotide sequence ID" value="NC_001263.1"/>
</dbReference>
<dbReference type="SMR" id="Q9RWF1"/>
<dbReference type="FunCoup" id="Q9RWF1">
    <property type="interactions" value="187"/>
</dbReference>
<dbReference type="STRING" id="243230.DR_0718"/>
<dbReference type="PaxDb" id="243230-DR_0718"/>
<dbReference type="EnsemblBacteria" id="AAF10296">
    <property type="protein sequence ID" value="AAF10296"/>
    <property type="gene ID" value="DR_0718"/>
</dbReference>
<dbReference type="GeneID" id="69516965"/>
<dbReference type="KEGG" id="dra:DR_0718"/>
<dbReference type="PATRIC" id="fig|243230.17.peg.896"/>
<dbReference type="eggNOG" id="COG0853">
    <property type="taxonomic scope" value="Bacteria"/>
</dbReference>
<dbReference type="HOGENOM" id="CLU_115305_2_1_0"/>
<dbReference type="InParanoid" id="Q9RWF1"/>
<dbReference type="OrthoDB" id="9803983at2"/>
<dbReference type="UniPathway" id="UPA00028">
    <property type="reaction ID" value="UER00002"/>
</dbReference>
<dbReference type="Proteomes" id="UP000002524">
    <property type="component" value="Chromosome 1"/>
</dbReference>
<dbReference type="GO" id="GO:0005829">
    <property type="term" value="C:cytosol"/>
    <property type="evidence" value="ECO:0000318"/>
    <property type="project" value="GO_Central"/>
</dbReference>
<dbReference type="GO" id="GO:0004068">
    <property type="term" value="F:aspartate 1-decarboxylase activity"/>
    <property type="evidence" value="ECO:0000318"/>
    <property type="project" value="GO_Central"/>
</dbReference>
<dbReference type="GO" id="GO:0006523">
    <property type="term" value="P:alanine biosynthetic process"/>
    <property type="evidence" value="ECO:0000318"/>
    <property type="project" value="GO_Central"/>
</dbReference>
<dbReference type="GO" id="GO:0015940">
    <property type="term" value="P:pantothenate biosynthetic process"/>
    <property type="evidence" value="ECO:0000318"/>
    <property type="project" value="GO_Central"/>
</dbReference>
<dbReference type="CDD" id="cd06919">
    <property type="entry name" value="Asp_decarbox"/>
    <property type="match status" value="1"/>
</dbReference>
<dbReference type="Gene3D" id="2.40.40.20">
    <property type="match status" value="1"/>
</dbReference>
<dbReference type="HAMAP" id="MF_00446">
    <property type="entry name" value="PanD"/>
    <property type="match status" value="1"/>
</dbReference>
<dbReference type="InterPro" id="IPR009010">
    <property type="entry name" value="Asp_de-COase-like_dom_sf"/>
</dbReference>
<dbReference type="InterPro" id="IPR003190">
    <property type="entry name" value="Asp_decarbox"/>
</dbReference>
<dbReference type="NCBIfam" id="TIGR00223">
    <property type="entry name" value="panD"/>
    <property type="match status" value="1"/>
</dbReference>
<dbReference type="PANTHER" id="PTHR21012">
    <property type="entry name" value="ASPARTATE 1-DECARBOXYLASE"/>
    <property type="match status" value="1"/>
</dbReference>
<dbReference type="PANTHER" id="PTHR21012:SF0">
    <property type="entry name" value="ASPARTATE 1-DECARBOXYLASE"/>
    <property type="match status" value="1"/>
</dbReference>
<dbReference type="Pfam" id="PF02261">
    <property type="entry name" value="Asp_decarbox"/>
    <property type="match status" value="1"/>
</dbReference>
<dbReference type="PIRSF" id="PIRSF006246">
    <property type="entry name" value="Asp_decarbox"/>
    <property type="match status" value="1"/>
</dbReference>
<dbReference type="SUPFAM" id="SSF50692">
    <property type="entry name" value="ADC-like"/>
    <property type="match status" value="1"/>
</dbReference>
<sequence>MERIMFRAKIHRATVTQADLDYVGSVTIDQDLLDAADILVNEKVDIWNITNGNRLHTYALSGPRGSGVIGINGAAAHLMRPGDMVIIAAFGNFSEEEARTLEPKVVLVDAKNRLLELQPV</sequence>
<organism>
    <name type="scientific">Deinococcus radiodurans (strain ATCC 13939 / DSM 20539 / JCM 16871 / CCUG 27074 / LMG 4051 / NBRC 15346 / NCIMB 9279 / VKM B-1422 / R1)</name>
    <dbReference type="NCBI Taxonomy" id="243230"/>
    <lineage>
        <taxon>Bacteria</taxon>
        <taxon>Thermotogati</taxon>
        <taxon>Deinococcota</taxon>
        <taxon>Deinococci</taxon>
        <taxon>Deinococcales</taxon>
        <taxon>Deinococcaceae</taxon>
        <taxon>Deinococcus</taxon>
    </lineage>
</organism>
<protein>
    <recommendedName>
        <fullName evidence="1">Aspartate 1-decarboxylase</fullName>
        <ecNumber evidence="1">4.1.1.11</ecNumber>
    </recommendedName>
    <alternativeName>
        <fullName evidence="1">Aspartate alpha-decarboxylase</fullName>
    </alternativeName>
    <component>
        <recommendedName>
            <fullName evidence="1">Aspartate 1-decarboxylase beta chain</fullName>
        </recommendedName>
    </component>
    <component>
        <recommendedName>
            <fullName evidence="1">Aspartate 1-decarboxylase alpha chain</fullName>
        </recommendedName>
    </component>
</protein>
<accession>Q9RWF1</accession>
<comment type="function">
    <text evidence="1">Catalyzes the pyruvoyl-dependent decarboxylation of aspartate to produce beta-alanine.</text>
</comment>
<comment type="catalytic activity">
    <reaction evidence="1">
        <text>L-aspartate + H(+) = beta-alanine + CO2</text>
        <dbReference type="Rhea" id="RHEA:19497"/>
        <dbReference type="ChEBI" id="CHEBI:15378"/>
        <dbReference type="ChEBI" id="CHEBI:16526"/>
        <dbReference type="ChEBI" id="CHEBI:29991"/>
        <dbReference type="ChEBI" id="CHEBI:57966"/>
        <dbReference type="EC" id="4.1.1.11"/>
    </reaction>
</comment>
<comment type="cofactor">
    <cofactor evidence="1">
        <name>pyruvate</name>
        <dbReference type="ChEBI" id="CHEBI:15361"/>
    </cofactor>
    <text evidence="1">Binds 1 pyruvoyl group covalently per subunit.</text>
</comment>
<comment type="pathway">
    <text evidence="1">Cofactor biosynthesis; (R)-pantothenate biosynthesis; beta-alanine from L-aspartate: step 1/1.</text>
</comment>
<comment type="subunit">
    <text evidence="1">Heterooctamer of four alpha and four beta subunits.</text>
</comment>
<comment type="subcellular location">
    <subcellularLocation>
        <location evidence="1">Cytoplasm</location>
    </subcellularLocation>
</comment>
<comment type="PTM">
    <text evidence="1">Is synthesized initially as an inactive proenzyme, which is activated by self-cleavage at a specific serine bond to produce a beta-subunit with a hydroxyl group at its C-terminus and an alpha-subunit with a pyruvoyl group at its N-terminus.</text>
</comment>
<comment type="similarity">
    <text evidence="1">Belongs to the PanD family.</text>
</comment>
<reference key="1">
    <citation type="journal article" date="1999" name="Science">
        <title>Genome sequence of the radioresistant bacterium Deinococcus radiodurans R1.</title>
        <authorList>
            <person name="White O."/>
            <person name="Eisen J.A."/>
            <person name="Heidelberg J.F."/>
            <person name="Hickey E.K."/>
            <person name="Peterson J.D."/>
            <person name="Dodson R.J."/>
            <person name="Haft D.H."/>
            <person name="Gwinn M.L."/>
            <person name="Nelson W.C."/>
            <person name="Richardson D.L."/>
            <person name="Moffat K.S."/>
            <person name="Qin H."/>
            <person name="Jiang L."/>
            <person name="Pamphile W."/>
            <person name="Crosby M."/>
            <person name="Shen M."/>
            <person name="Vamathevan J.J."/>
            <person name="Lam P."/>
            <person name="McDonald L.A."/>
            <person name="Utterback T.R."/>
            <person name="Zalewski C."/>
            <person name="Makarova K.S."/>
            <person name="Aravind L."/>
            <person name="Daly M.J."/>
            <person name="Minton K.W."/>
            <person name="Fleischmann R.D."/>
            <person name="Ketchum K.A."/>
            <person name="Nelson K.E."/>
            <person name="Salzberg S.L."/>
            <person name="Smith H.O."/>
            <person name="Venter J.C."/>
            <person name="Fraser C.M."/>
        </authorList>
    </citation>
    <scope>NUCLEOTIDE SEQUENCE [LARGE SCALE GENOMIC DNA]</scope>
    <source>
        <strain>ATCC 13939 / DSM 20539 / JCM 16871 / CCUG 27074 / LMG 4051 / NBRC 15346 / NCIMB 9279 / VKM B-1422 / R1</strain>
    </source>
</reference>
<gene>
    <name evidence="1" type="primary">panD</name>
    <name type="ordered locus">DR_0718</name>
</gene>
<name>PAND_DEIRA</name>